<protein>
    <recommendedName>
        <fullName evidence="1">Sec-independent protein translocase protein TatA</fullName>
    </recommendedName>
</protein>
<organism>
    <name type="scientific">Bacillus cereus (strain ATCC 10987 / NRS 248)</name>
    <dbReference type="NCBI Taxonomy" id="222523"/>
    <lineage>
        <taxon>Bacteria</taxon>
        <taxon>Bacillati</taxon>
        <taxon>Bacillota</taxon>
        <taxon>Bacilli</taxon>
        <taxon>Bacillales</taxon>
        <taxon>Bacillaceae</taxon>
        <taxon>Bacillus</taxon>
        <taxon>Bacillus cereus group</taxon>
    </lineage>
</organism>
<feature type="chain" id="PRO_1000058950" description="Sec-independent protein translocase protein TatA">
    <location>
        <begin position="1"/>
        <end position="61"/>
    </location>
</feature>
<feature type="transmembrane region" description="Helical" evidence="1">
    <location>
        <begin position="1"/>
        <end position="21"/>
    </location>
</feature>
<dbReference type="EMBL" id="AE017194">
    <property type="protein sequence ID" value="AAS41191.1"/>
    <property type="molecule type" value="Genomic_DNA"/>
</dbReference>
<dbReference type="SMR" id="Q738X1"/>
<dbReference type="KEGG" id="bca:BCE_2272"/>
<dbReference type="HOGENOM" id="CLU_086034_6_0_9"/>
<dbReference type="Proteomes" id="UP000002527">
    <property type="component" value="Chromosome"/>
</dbReference>
<dbReference type="GO" id="GO:0033281">
    <property type="term" value="C:TAT protein transport complex"/>
    <property type="evidence" value="ECO:0007669"/>
    <property type="project" value="UniProtKB-UniRule"/>
</dbReference>
<dbReference type="GO" id="GO:0008320">
    <property type="term" value="F:protein transmembrane transporter activity"/>
    <property type="evidence" value="ECO:0007669"/>
    <property type="project" value="UniProtKB-UniRule"/>
</dbReference>
<dbReference type="GO" id="GO:0043953">
    <property type="term" value="P:protein transport by the Tat complex"/>
    <property type="evidence" value="ECO:0007669"/>
    <property type="project" value="UniProtKB-UniRule"/>
</dbReference>
<dbReference type="Gene3D" id="1.20.5.3310">
    <property type="match status" value="1"/>
</dbReference>
<dbReference type="HAMAP" id="MF_00236">
    <property type="entry name" value="TatA_E"/>
    <property type="match status" value="1"/>
</dbReference>
<dbReference type="InterPro" id="IPR003369">
    <property type="entry name" value="TatA/B/E"/>
</dbReference>
<dbReference type="InterPro" id="IPR006312">
    <property type="entry name" value="TatA/E"/>
</dbReference>
<dbReference type="NCBIfam" id="NF011430">
    <property type="entry name" value="PRK14861.1"/>
    <property type="match status" value="1"/>
</dbReference>
<dbReference type="NCBIfam" id="TIGR01411">
    <property type="entry name" value="tatAE"/>
    <property type="match status" value="1"/>
</dbReference>
<dbReference type="PANTHER" id="PTHR42982">
    <property type="entry name" value="SEC-INDEPENDENT PROTEIN TRANSLOCASE PROTEIN TATA"/>
    <property type="match status" value="1"/>
</dbReference>
<dbReference type="PANTHER" id="PTHR42982:SF1">
    <property type="entry name" value="SEC-INDEPENDENT PROTEIN TRANSLOCASE PROTEIN TATA"/>
    <property type="match status" value="1"/>
</dbReference>
<dbReference type="Pfam" id="PF02416">
    <property type="entry name" value="TatA_B_E"/>
    <property type="match status" value="1"/>
</dbReference>
<dbReference type="PRINTS" id="PR01506">
    <property type="entry name" value="TATBPROTEIN"/>
</dbReference>
<name>TATA_BACC1</name>
<comment type="function">
    <text evidence="1">Part of the twin-arginine translocation (Tat) system that transports large folded proteins containing a characteristic twin-arginine motif in their signal peptide across membranes. TatA could form the protein-conducting channel of the Tat system.</text>
</comment>
<comment type="subunit">
    <text evidence="1">Forms a complex with TatC.</text>
</comment>
<comment type="subcellular location">
    <subcellularLocation>
        <location evidence="1">Cell membrane</location>
        <topology evidence="1">Single-pass membrane protein</topology>
    </subcellularLocation>
</comment>
<comment type="similarity">
    <text evidence="1">Belongs to the TatA/E family.</text>
</comment>
<accession>Q738X1</accession>
<proteinExistence type="inferred from homology"/>
<evidence type="ECO:0000255" key="1">
    <source>
        <dbReference type="HAMAP-Rule" id="MF_00236"/>
    </source>
</evidence>
<gene>
    <name evidence="1" type="primary">tatA</name>
    <name type="ordered locus">BCE_2272</name>
</gene>
<sequence length="61" mass="6852">MFSNIGFPGLILILVAVLILFGPKKLPEIGKALGETLKEFKKSTKELTDDAFQEKEKKEKM</sequence>
<reference key="1">
    <citation type="journal article" date="2004" name="Nucleic Acids Res.">
        <title>The genome sequence of Bacillus cereus ATCC 10987 reveals metabolic adaptations and a large plasmid related to Bacillus anthracis pXO1.</title>
        <authorList>
            <person name="Rasko D.A."/>
            <person name="Ravel J."/>
            <person name="Oekstad O.A."/>
            <person name="Helgason E."/>
            <person name="Cer R.Z."/>
            <person name="Jiang L."/>
            <person name="Shores K.A."/>
            <person name="Fouts D.E."/>
            <person name="Tourasse N.J."/>
            <person name="Angiuoli S.V."/>
            <person name="Kolonay J.F."/>
            <person name="Nelson W.C."/>
            <person name="Kolstoe A.-B."/>
            <person name="Fraser C.M."/>
            <person name="Read T.D."/>
        </authorList>
    </citation>
    <scope>NUCLEOTIDE SEQUENCE [LARGE SCALE GENOMIC DNA]</scope>
    <source>
        <strain>ATCC 10987 / NRS 248</strain>
    </source>
</reference>
<keyword id="KW-1003">Cell membrane</keyword>
<keyword id="KW-0472">Membrane</keyword>
<keyword id="KW-0653">Protein transport</keyword>
<keyword id="KW-0811">Translocation</keyword>
<keyword id="KW-0812">Transmembrane</keyword>
<keyword id="KW-1133">Transmembrane helix</keyword>
<keyword id="KW-0813">Transport</keyword>